<name>IMAND_PAESJ</name>
<proteinExistence type="inferred from homology"/>
<sequence>MAKITGIECIRTRKNGTWTIVKVMTDQDGLYGLGSASDVYNPEAVVQIIEQLLAPLLIGKDAANIEDLWQTMYMSGYWRNGALLHTAIGGIDMALWDIKGKEAGLPVYQLLGGACRAAVPCYGHAGGKDIAELKEDVHRFIEEGYTVIRVQMGGYGGGGFIDRDKANIPQQAWGSGPVFDEQSYLHAIPHMFEQLRNEFGMGVQFTHDVHEHLTPVNAIQLAKRVEPYSLFFLEDAIAPEQIGWYRHLRQQSATPQAVGELFVNPQEWTQLIKEQLIDFIRVRVSKAGGISACRKIAALAEAFGVRTAWQEGGENDPVNQAAAVHLDMAIWNFGIQEVNHFKPEEKDAFEGHIERKGGYLYPSQKPGLGIELDELKAQQLLGEGWSKSVYFNPYQLDRKADGTLVRP</sequence>
<accession>C6CVY9</accession>
<feature type="chain" id="PRO_0000429910" description="D-galactonate dehydratase family member Pjdr2_1176">
    <location>
        <begin position="1"/>
        <end position="407"/>
    </location>
</feature>
<feature type="binding site" evidence="1">
    <location>
        <position position="208"/>
    </location>
    <ligand>
        <name>Mg(2+)</name>
        <dbReference type="ChEBI" id="CHEBI:18420"/>
    </ligand>
</feature>
<feature type="binding site" evidence="1">
    <location>
        <position position="210"/>
    </location>
    <ligand>
        <name>D-arabinonate</name>
        <dbReference type="ChEBI" id="CHEBI:16157"/>
    </ligand>
</feature>
<feature type="binding site" evidence="1">
    <location>
        <position position="234"/>
    </location>
    <ligand>
        <name>Mg(2+)</name>
        <dbReference type="ChEBI" id="CHEBI:18420"/>
    </ligand>
</feature>
<feature type="binding site" evidence="1">
    <location>
        <position position="260"/>
    </location>
    <ligand>
        <name>D-arabinonate</name>
        <dbReference type="ChEBI" id="CHEBI:16157"/>
    </ligand>
</feature>
<feature type="binding site" evidence="1">
    <location>
        <position position="260"/>
    </location>
    <ligand>
        <name>Mg(2+)</name>
        <dbReference type="ChEBI" id="CHEBI:18420"/>
    </ligand>
</feature>
<feature type="binding site" evidence="1">
    <location>
        <position position="281"/>
    </location>
    <ligand>
        <name>D-arabinonate</name>
        <dbReference type="ChEBI" id="CHEBI:16157"/>
    </ligand>
</feature>
<feature type="binding site" evidence="1">
    <location>
        <position position="337"/>
    </location>
    <ligand>
        <name>D-arabinonate</name>
        <dbReference type="ChEBI" id="CHEBI:16157"/>
    </ligand>
</feature>
<keyword id="KW-0460">Magnesium</keyword>
<keyword id="KW-0479">Metal-binding</keyword>
<gene>
    <name type="ordered locus">Pjdr2_1176</name>
</gene>
<reference key="1">
    <citation type="journal article" date="2012" name="Stand. Genomic Sci.">
        <title>Complete genome sequence of Paenibacillus sp. strain JDR-2.</title>
        <authorList>
            <person name="Chow V."/>
            <person name="Nong G."/>
            <person name="St John F.J."/>
            <person name="Rice J.D."/>
            <person name="Dickstein E."/>
            <person name="Chertkov O."/>
            <person name="Bruce D."/>
            <person name="Detter C."/>
            <person name="Brettin T."/>
            <person name="Han J."/>
            <person name="Woyke T."/>
            <person name="Pitluck S."/>
            <person name="Nolan M."/>
            <person name="Pati A."/>
            <person name="Martin J."/>
            <person name="Copeland A."/>
            <person name="Land M.L."/>
            <person name="Goodwin L."/>
            <person name="Jones J.B."/>
            <person name="Ingram L.O."/>
            <person name="Shanmugam K.T."/>
            <person name="Preston J.F."/>
        </authorList>
    </citation>
    <scope>NUCLEOTIDE SEQUENCE [LARGE SCALE GENOMIC DNA]</scope>
    <source>
        <strain>JDR-2</strain>
    </source>
</reference>
<reference key="2">
    <citation type="journal article" date="2014" name="Biochemistry">
        <title>Discovery of function in the enolase superfamily: D-mannonate and D-gluconate dehydratases in the D-mannonate dehydratase subgroup.</title>
        <authorList>
            <person name="Wichelecki D.J."/>
            <person name="Balthazor B.M."/>
            <person name="Chau A.C."/>
            <person name="Vetting M.W."/>
            <person name="Fedorov A.A."/>
            <person name="Fedorov E.V."/>
            <person name="Lukk T."/>
            <person name="Patskovsky Y.V."/>
            <person name="Stead M.B."/>
            <person name="Hillerich B.S."/>
            <person name="Seidel R.D."/>
            <person name="Almo S.C."/>
            <person name="Gerlt J.A."/>
        </authorList>
    </citation>
    <scope>FUNCTION</scope>
    <scope>LACK OF D-MANNONATE DEHYDRATASE ACTIVITY</scope>
    <source>
        <strain>JDR-2</strain>
    </source>
</reference>
<comment type="function">
    <text evidence="2">Has no detectable activity with D-mannonate and with a panel of 70 other acid sugars (in vitro), in spite of the conservation of the residues that are expected to be important for catalytic activity and cofactor binding. May have evolved a divergent function.</text>
</comment>
<comment type="similarity">
    <text evidence="3">Belongs to the mandelate racemase/muconate lactonizing enzyme family. GalD subfamily.</text>
</comment>
<protein>
    <recommendedName>
        <fullName>D-galactonate dehydratase family member Pjdr2_1176</fullName>
    </recommendedName>
</protein>
<dbReference type="EMBL" id="CP001656">
    <property type="protein sequence ID" value="ACS99853.1"/>
    <property type="molecule type" value="Genomic_DNA"/>
</dbReference>
<dbReference type="RefSeq" id="WP_015842800.1">
    <property type="nucleotide sequence ID" value="NC_012914.1"/>
</dbReference>
<dbReference type="SMR" id="C6CVY9"/>
<dbReference type="STRING" id="324057.Pjdr2_1176"/>
<dbReference type="KEGG" id="pjd:Pjdr2_1176"/>
<dbReference type="eggNOG" id="COG4948">
    <property type="taxonomic scope" value="Bacteria"/>
</dbReference>
<dbReference type="HOGENOM" id="CLU_030273_6_1_9"/>
<dbReference type="OrthoDB" id="9775391at2"/>
<dbReference type="GO" id="GO:0000287">
    <property type="term" value="F:magnesium ion binding"/>
    <property type="evidence" value="ECO:0000250"/>
    <property type="project" value="UniProtKB"/>
</dbReference>
<dbReference type="GO" id="GO:0009063">
    <property type="term" value="P:amino acid catabolic process"/>
    <property type="evidence" value="ECO:0007669"/>
    <property type="project" value="InterPro"/>
</dbReference>
<dbReference type="FunFam" id="3.20.20.120:FF:000011">
    <property type="entry name" value="D-galactonate dehydratase family member VSWAT3_13707"/>
    <property type="match status" value="1"/>
</dbReference>
<dbReference type="Gene3D" id="3.20.20.120">
    <property type="entry name" value="Enolase-like C-terminal domain"/>
    <property type="match status" value="1"/>
</dbReference>
<dbReference type="Gene3D" id="3.30.390.10">
    <property type="entry name" value="Enolase-like, N-terminal domain"/>
    <property type="match status" value="1"/>
</dbReference>
<dbReference type="InterPro" id="IPR034593">
    <property type="entry name" value="DgoD-like"/>
</dbReference>
<dbReference type="InterPro" id="IPR036849">
    <property type="entry name" value="Enolase-like_C_sf"/>
</dbReference>
<dbReference type="InterPro" id="IPR029017">
    <property type="entry name" value="Enolase-like_N"/>
</dbReference>
<dbReference type="InterPro" id="IPR029065">
    <property type="entry name" value="Enolase_C-like"/>
</dbReference>
<dbReference type="InterPro" id="IPR018110">
    <property type="entry name" value="Mandel_Rmase/mucon_lact_enz_CS"/>
</dbReference>
<dbReference type="InterPro" id="IPR013342">
    <property type="entry name" value="Mandelate_racemase_C"/>
</dbReference>
<dbReference type="InterPro" id="IPR013341">
    <property type="entry name" value="Mandelate_racemase_N_dom"/>
</dbReference>
<dbReference type="PANTHER" id="PTHR48080">
    <property type="entry name" value="D-GALACTONATE DEHYDRATASE-RELATED"/>
    <property type="match status" value="1"/>
</dbReference>
<dbReference type="PANTHER" id="PTHR48080:SF6">
    <property type="entry name" value="STARVATION-SENSING PROTEIN RSPA"/>
    <property type="match status" value="1"/>
</dbReference>
<dbReference type="Pfam" id="PF13378">
    <property type="entry name" value="MR_MLE_C"/>
    <property type="match status" value="1"/>
</dbReference>
<dbReference type="Pfam" id="PF02746">
    <property type="entry name" value="MR_MLE_N"/>
    <property type="match status" value="1"/>
</dbReference>
<dbReference type="SFLD" id="SFLDS00001">
    <property type="entry name" value="Enolase"/>
    <property type="match status" value="1"/>
</dbReference>
<dbReference type="SMART" id="SM00922">
    <property type="entry name" value="MR_MLE"/>
    <property type="match status" value="1"/>
</dbReference>
<dbReference type="SUPFAM" id="SSF51604">
    <property type="entry name" value="Enolase C-terminal domain-like"/>
    <property type="match status" value="1"/>
</dbReference>
<dbReference type="SUPFAM" id="SSF54826">
    <property type="entry name" value="Enolase N-terminal domain-like"/>
    <property type="match status" value="1"/>
</dbReference>
<dbReference type="PROSITE" id="PS00908">
    <property type="entry name" value="MR_MLE_1"/>
    <property type="match status" value="1"/>
</dbReference>
<evidence type="ECO:0000250" key="1"/>
<evidence type="ECO:0000269" key="2">
    <source>
    </source>
</evidence>
<evidence type="ECO:0000305" key="3"/>
<organism>
    <name type="scientific">Paenibacillus sp. (strain JDR-2)</name>
    <dbReference type="NCBI Taxonomy" id="324057"/>
    <lineage>
        <taxon>Bacteria</taxon>
        <taxon>Bacillati</taxon>
        <taxon>Bacillota</taxon>
        <taxon>Bacilli</taxon>
        <taxon>Bacillales</taxon>
        <taxon>Paenibacillaceae</taxon>
        <taxon>Paenibacillus</taxon>
    </lineage>
</organism>